<dbReference type="EMBL" id="AF076918">
    <property type="protein sequence ID" value="AAC96114.1"/>
    <property type="status" value="ALT_FRAME"/>
    <property type="molecule type" value="mRNA"/>
</dbReference>
<dbReference type="EMBL" id="AB011680">
    <property type="protein sequence ID" value="BAA75637.1"/>
    <property type="molecule type" value="mRNA"/>
</dbReference>
<dbReference type="EMBL" id="BC045467">
    <property type="protein sequence ID" value="AAH45467.1"/>
    <property type="molecule type" value="mRNA"/>
</dbReference>
<dbReference type="RefSeq" id="NP_571502.2">
    <property type="nucleotide sequence ID" value="NM_131427.2"/>
</dbReference>
<dbReference type="SMR" id="Q9YGX5"/>
<dbReference type="FunCoup" id="Q9YGX5">
    <property type="interactions" value="531"/>
</dbReference>
<dbReference type="STRING" id="7955.ENSDARP00000089674"/>
<dbReference type="PaxDb" id="7955-ENSDARP00000109570"/>
<dbReference type="DNASU" id="30702"/>
<dbReference type="Ensembl" id="ENSDART00000098904">
    <property type="protein sequence ID" value="ENSDARP00000089674"/>
    <property type="gene ID" value="ENSDARG00000008454"/>
</dbReference>
<dbReference type="GeneID" id="30702"/>
<dbReference type="KEGG" id="dre:30702"/>
<dbReference type="AGR" id="ZFIN:ZDB-GENE-990927-1"/>
<dbReference type="CTD" id="30702"/>
<dbReference type="ZFIN" id="ZDB-GENE-990927-1">
    <property type="gene designation" value="cpeb1b"/>
</dbReference>
<dbReference type="eggNOG" id="KOG0129">
    <property type="taxonomic scope" value="Eukaryota"/>
</dbReference>
<dbReference type="HOGENOM" id="CLU_014948_1_1_1"/>
<dbReference type="InParanoid" id="Q9YGX5"/>
<dbReference type="OMA" id="SVWPNWD"/>
<dbReference type="OrthoDB" id="10033548at2759"/>
<dbReference type="PhylomeDB" id="Q9YGX5"/>
<dbReference type="TreeFam" id="TF317658"/>
<dbReference type="PRO" id="PR:Q9YGX5"/>
<dbReference type="Proteomes" id="UP000000437">
    <property type="component" value="Chromosome 7"/>
</dbReference>
<dbReference type="Bgee" id="ENSDARG00000008454">
    <property type="expression patterns" value="Expressed in mature ovarian follicle and 30 other cell types or tissues"/>
</dbReference>
<dbReference type="ExpressionAtlas" id="Q9YGX5">
    <property type="expression patterns" value="baseline"/>
</dbReference>
<dbReference type="GO" id="GO:0005737">
    <property type="term" value="C:cytoplasm"/>
    <property type="evidence" value="ECO:0000250"/>
    <property type="project" value="UniProtKB"/>
</dbReference>
<dbReference type="GO" id="GO:0043005">
    <property type="term" value="C:neuron projection"/>
    <property type="evidence" value="ECO:0000318"/>
    <property type="project" value="GO_Central"/>
</dbReference>
<dbReference type="GO" id="GO:0005634">
    <property type="term" value="C:nucleus"/>
    <property type="evidence" value="ECO:0000250"/>
    <property type="project" value="UniProtKB"/>
</dbReference>
<dbReference type="GO" id="GO:0032991">
    <property type="term" value="C:protein-containing complex"/>
    <property type="evidence" value="ECO:0000353"/>
    <property type="project" value="ZFIN"/>
</dbReference>
<dbReference type="GO" id="GO:0045202">
    <property type="term" value="C:synapse"/>
    <property type="evidence" value="ECO:0000318"/>
    <property type="project" value="GO_Central"/>
</dbReference>
<dbReference type="GO" id="GO:0046872">
    <property type="term" value="F:metal ion binding"/>
    <property type="evidence" value="ECO:0007669"/>
    <property type="project" value="UniProtKB-KW"/>
</dbReference>
<dbReference type="GO" id="GO:0035925">
    <property type="term" value="F:mRNA 3'-UTR AU-rich region binding"/>
    <property type="evidence" value="ECO:0000250"/>
    <property type="project" value="UniProtKB"/>
</dbReference>
<dbReference type="GO" id="GO:0003730">
    <property type="term" value="F:mRNA 3'-UTR binding"/>
    <property type="evidence" value="ECO:0000318"/>
    <property type="project" value="GO_Central"/>
</dbReference>
<dbReference type="GO" id="GO:0000900">
    <property type="term" value="F:mRNA regulatory element binding translation repressor activity"/>
    <property type="evidence" value="ECO:0000250"/>
    <property type="project" value="UniProtKB"/>
</dbReference>
<dbReference type="GO" id="GO:0043022">
    <property type="term" value="F:ribosome binding"/>
    <property type="evidence" value="ECO:0000318"/>
    <property type="project" value="GO_Central"/>
</dbReference>
<dbReference type="GO" id="GO:0003723">
    <property type="term" value="F:RNA binding"/>
    <property type="evidence" value="ECO:0000353"/>
    <property type="project" value="ZFIN"/>
</dbReference>
<dbReference type="GO" id="GO:0008135">
    <property type="term" value="F:translation factor activity, RNA binding"/>
    <property type="evidence" value="ECO:0000318"/>
    <property type="project" value="GO_Central"/>
</dbReference>
<dbReference type="GO" id="GO:0071230">
    <property type="term" value="P:cellular response to amino acid stimulus"/>
    <property type="evidence" value="ECO:0000250"/>
    <property type="project" value="UniProtKB"/>
</dbReference>
<dbReference type="GO" id="GO:0071456">
    <property type="term" value="P:cellular response to hypoxia"/>
    <property type="evidence" value="ECO:0000250"/>
    <property type="project" value="UniProtKB"/>
</dbReference>
<dbReference type="GO" id="GO:0032869">
    <property type="term" value="P:cellular response to insulin stimulus"/>
    <property type="evidence" value="ECO:0000250"/>
    <property type="project" value="UniProtKB"/>
</dbReference>
<dbReference type="GO" id="GO:0006397">
    <property type="term" value="P:mRNA processing"/>
    <property type="evidence" value="ECO:0007669"/>
    <property type="project" value="UniProtKB-KW"/>
</dbReference>
<dbReference type="GO" id="GO:2000766">
    <property type="term" value="P:negative regulation of cytoplasmic translation"/>
    <property type="evidence" value="ECO:0000250"/>
    <property type="project" value="UniProtKB"/>
</dbReference>
<dbReference type="GO" id="GO:0031440">
    <property type="term" value="P:regulation of mRNA 3'-end processing"/>
    <property type="evidence" value="ECO:0000250"/>
    <property type="project" value="UniProtKB"/>
</dbReference>
<dbReference type="CDD" id="cd19757">
    <property type="entry name" value="Bbox1"/>
    <property type="match status" value="1"/>
</dbReference>
<dbReference type="CDD" id="cd12723">
    <property type="entry name" value="RRM1_CPEB1"/>
    <property type="match status" value="1"/>
</dbReference>
<dbReference type="CDD" id="cd12725">
    <property type="entry name" value="RRM2_CPEB1"/>
    <property type="match status" value="1"/>
</dbReference>
<dbReference type="FunFam" id="3.30.70.330:FF:000054">
    <property type="entry name" value="Cytoplasmic polyadenylation element-binding protein 1"/>
    <property type="match status" value="1"/>
</dbReference>
<dbReference type="FunFam" id="3.30.70.330:FF:000086">
    <property type="entry name" value="Putative Cytoplasmic polyadenylation element-binding protein 1"/>
    <property type="match status" value="1"/>
</dbReference>
<dbReference type="FunFam" id="4.10.640.40:FF:000002">
    <property type="entry name" value="Putative Cytoplasmic polyadenylation element-binding protein 1"/>
    <property type="match status" value="1"/>
</dbReference>
<dbReference type="Gene3D" id="3.30.70.330">
    <property type="match status" value="2"/>
</dbReference>
<dbReference type="Gene3D" id="4.10.640.40">
    <property type="entry name" value="Cytoplasmic polyadenylation element-binding protein, ZZ domain"/>
    <property type="match status" value="1"/>
</dbReference>
<dbReference type="InterPro" id="IPR032292">
    <property type="entry name" value="CEBP1_N"/>
</dbReference>
<dbReference type="InterPro" id="IPR032296">
    <property type="entry name" value="CEBP_ZZ"/>
</dbReference>
<dbReference type="InterPro" id="IPR038446">
    <property type="entry name" value="CEBP_ZZ_sf"/>
</dbReference>
<dbReference type="InterPro" id="IPR034819">
    <property type="entry name" value="CPEB"/>
</dbReference>
<dbReference type="InterPro" id="IPR034977">
    <property type="entry name" value="CPEB1_RRM1"/>
</dbReference>
<dbReference type="InterPro" id="IPR012677">
    <property type="entry name" value="Nucleotide-bd_a/b_plait_sf"/>
</dbReference>
<dbReference type="InterPro" id="IPR035979">
    <property type="entry name" value="RBD_domain_sf"/>
</dbReference>
<dbReference type="InterPro" id="IPR000504">
    <property type="entry name" value="RRM_dom"/>
</dbReference>
<dbReference type="PANTHER" id="PTHR12566">
    <property type="entry name" value="CYTOPLASMIC POLYADENYLATION ELEMENT BINDING PROTEIN CPEB"/>
    <property type="match status" value="1"/>
</dbReference>
<dbReference type="PANTHER" id="PTHR12566:SF9">
    <property type="entry name" value="CYTOPLASMIC POLYADENYLATION ELEMENT-BINDING PROTEIN 1"/>
    <property type="match status" value="1"/>
</dbReference>
<dbReference type="Pfam" id="PF16368">
    <property type="entry name" value="CEBP1_N"/>
    <property type="match status" value="1"/>
</dbReference>
<dbReference type="Pfam" id="PF16366">
    <property type="entry name" value="CEBP_ZZ"/>
    <property type="match status" value="1"/>
</dbReference>
<dbReference type="Pfam" id="PF16367">
    <property type="entry name" value="RRM_7"/>
    <property type="match status" value="1"/>
</dbReference>
<dbReference type="SMART" id="SM00360">
    <property type="entry name" value="RRM"/>
    <property type="match status" value="2"/>
</dbReference>
<dbReference type="SUPFAM" id="SSF54928">
    <property type="entry name" value="RNA-binding domain, RBD"/>
    <property type="match status" value="1"/>
</dbReference>
<dbReference type="PROSITE" id="PS50102">
    <property type="entry name" value="RRM"/>
    <property type="match status" value="1"/>
</dbReference>
<reference key="1">
    <citation type="journal article" date="1998" name="Mech. Dev.">
        <title>Characterization of the zebrafish Orb/CPEB-related RNA-binding protein and localization of maternal components in the zebrafish oocyte.</title>
        <authorList>
            <person name="Bally-Cuifu L."/>
            <person name="Schatz W.J."/>
            <person name="Ho R.K."/>
        </authorList>
    </citation>
    <scope>NUCLEOTIDE SEQUENCE [MRNA]</scope>
    <scope>SUBCELLULAR LOCATION</scope>
    <scope>TISSUE SPECIFICITY</scope>
    <source>
        <tissue>Blastula</tissue>
    </source>
</reference>
<reference key="2">
    <citation type="submission" date="1998-03" db="EMBL/GenBank/DDBJ databases">
        <title>Identification of zebrafish maternal RNA-binding proteins, ZOR-1 and -2.</title>
        <authorList>
            <person name="Suzuki H."/>
            <person name="Maegawa S."/>
            <person name="Murakawa M."/>
            <person name="Hoshijima K."/>
            <person name="Shimura Y."/>
            <person name="Yasuda K."/>
            <person name="Inoue K."/>
        </authorList>
    </citation>
    <scope>NUCLEOTIDE SEQUENCE [MRNA]</scope>
</reference>
<reference key="3">
    <citation type="submission" date="2003-01" db="EMBL/GenBank/DDBJ databases">
        <authorList>
            <consortium name="NIH - Zebrafish Gene Collection (ZGC) project"/>
        </authorList>
    </citation>
    <scope>NUCLEOTIDE SEQUENCE [LARGE SCALE MRNA]</scope>
    <source>
        <strain>AB</strain>
    </source>
</reference>
<proteinExistence type="evidence at protein level"/>
<evidence type="ECO:0000250" key="1"/>
<evidence type="ECO:0000255" key="2">
    <source>
        <dbReference type="PROSITE-ProRule" id="PRU00176"/>
    </source>
</evidence>
<evidence type="ECO:0000256" key="3">
    <source>
        <dbReference type="SAM" id="MobiDB-lite"/>
    </source>
</evidence>
<evidence type="ECO:0000269" key="4">
    <source>
    </source>
</evidence>
<evidence type="ECO:0000305" key="5"/>
<comment type="function">
    <text evidence="1">Sequence-specific RNA-binding protein that regulates mRNA cytoplasmic polyadenylation and translation initiation during oocyte maturation and early development. Binds to the cytoplasmic polyadenylation element (CPE), an uridine-rich sequence element (consensus sequence 5'-UUUUUAU-3') within the mRNA 3'-UTR (By similarity).</text>
</comment>
<comment type="subcellular location">
    <subcellularLocation>
        <location evidence="4">Cytoplasm</location>
    </subcellularLocation>
    <text>Microtubule-associated.</text>
</comment>
<comment type="tissue specificity">
    <text evidence="4">Expressed in oocytes (at protein level). During oocyte maturation becomes detectable at stage Ib, and remains ubiquitously distributed within the oocyte cytoplasm until stage II. It then follows a gradual accumulation to the future animal pole during stage III, and remains localized to this pole at stage IV (at protein level). Expressed in oocytes, blastomeres and pre-mid-blastula transition embryos. Its expression during oogenesis is ubiquitous at stages I and II, but gradually accumulated at the periphery of the oocyte in the presumptive animal pole during stage III. Expression was maintained in that region at stage IV, and then became delocalized at stage V to cover a much broader area presumably encompassing the future blastodisc.</text>
</comment>
<comment type="similarity">
    <text evidence="5">Belongs to the RRM CPEB family.</text>
</comment>
<comment type="sequence caution" evidence="5">
    <conflict type="frameshift">
        <sequence resource="EMBL-CDS" id="AAC96114"/>
    </conflict>
</comment>
<feature type="chain" id="PRO_0000269255" description="Cytoplasmic polyadenylation element-binding protein 1">
    <location>
        <begin position="1"/>
        <end position="559"/>
    </location>
</feature>
<feature type="domain" description="RRM 1" evidence="2">
    <location>
        <begin position="304"/>
        <end position="401"/>
    </location>
</feature>
<feature type="domain" description="RRM 2" evidence="2">
    <location>
        <begin position="423"/>
        <end position="504"/>
    </location>
</feature>
<feature type="region of interest" description="Disordered" evidence="3">
    <location>
        <begin position="222"/>
        <end position="243"/>
    </location>
</feature>
<feature type="binding site" evidence="1">
    <location>
        <position position="508"/>
    </location>
    <ligand>
        <name>Zn(2+)</name>
        <dbReference type="ChEBI" id="CHEBI:29105"/>
        <label>1</label>
    </ligand>
</feature>
<feature type="binding site" evidence="1">
    <location>
        <position position="511"/>
    </location>
    <ligand>
        <name>Zn(2+)</name>
        <dbReference type="ChEBI" id="CHEBI:29105"/>
        <label>1</label>
    </ligand>
</feature>
<feature type="binding site" evidence="1">
    <location>
        <position position="520"/>
    </location>
    <ligand>
        <name>Zn(2+)</name>
        <dbReference type="ChEBI" id="CHEBI:29105"/>
        <label>2</label>
    </ligand>
</feature>
<feature type="binding site" evidence="1">
    <location>
        <position position="525"/>
    </location>
    <ligand>
        <name>Zn(2+)</name>
        <dbReference type="ChEBI" id="CHEBI:29105"/>
        <label>2</label>
    </ligand>
</feature>
<feature type="binding site" evidence="1">
    <location>
        <position position="530"/>
    </location>
    <ligand>
        <name>Zn(2+)</name>
        <dbReference type="ChEBI" id="CHEBI:29105"/>
        <label>1</label>
    </ligand>
</feature>
<feature type="binding site" evidence="1">
    <location>
        <position position="533"/>
    </location>
    <ligand>
        <name>Zn(2+)</name>
        <dbReference type="ChEBI" id="CHEBI:29105"/>
        <label>1</label>
    </ligand>
</feature>
<feature type="binding site" evidence="1">
    <location>
        <position position="538"/>
    </location>
    <ligand>
        <name>Zn(2+)</name>
        <dbReference type="ChEBI" id="CHEBI:29105"/>
        <label>2</label>
    </ligand>
</feature>
<feature type="binding site" evidence="1">
    <location>
        <position position="546"/>
    </location>
    <ligand>
        <name>Zn(2+)</name>
        <dbReference type="ChEBI" id="CHEBI:29105"/>
        <label>2</label>
    </ligand>
</feature>
<feature type="sequence conflict" description="In Ref. 1; AAC96114." evidence="5" ref="1">
    <original>D</original>
    <variation>E</variation>
    <location>
        <position position="18"/>
    </location>
</feature>
<feature type="sequence conflict" description="In Ref. 1; AAC96114." evidence="5" ref="1">
    <original>S</original>
    <variation>I</variation>
    <location>
        <position position="26"/>
    </location>
</feature>
<feature type="sequence conflict" description="In Ref. 1; AAC96114." evidence="5" ref="1">
    <original>W</original>
    <variation>R</variation>
    <location>
        <position position="256"/>
    </location>
</feature>
<feature type="sequence conflict" description="In Ref. 1; AAC96114." evidence="5" ref="1">
    <original>Y</original>
    <variation>C</variation>
    <location>
        <position position="452"/>
    </location>
</feature>
<accession>Q9YGX5</accession>
<accession>O93386</accession>
<gene>
    <name type="primary">cpeb1</name>
    <name type="synonym">zor1</name>
    <name type="synonym">zorba</name>
</gene>
<sequence>MAFSLRENPRLLNCLDSDIPALSTCSNADAFCRMNTMLGNSLDLSGVCTTPTAKCKRDPFNDRPDSDLSAVRSRMLFPSGGQDSSRGLPDVNNWGLGLQSLSLSDWERPWSSHDTDPSVKTNTASLQGILGTPSQLTNKLSNYSDSSIGATDFLEKFPGMARLNSQSFLDSHSISPVDSETSGFSSGSDHLSDLLSSLRISPSVPFLMSSMQRDPLKLALDSRMDHSSSPLTPPPSASPSGSLSHRWPGASIWPSWDLMKTPESPFSIEREAWLHRQAASINEATFTWSGQLPPRHYQNPVYSCKVFLGGVPWDITEAGLINTFKCYGPLSVEWPGKDGKHPRCPPKGNMPKGYVYLVFESDKSVRALLQDCTEDLLHPEGYSEYYFKMSSRRMRCKDAQVIPWVISDSNYVSCPSQRLDPRNTVFVGALHGMLNAEALASIMNDLFGGVVYAGIDTDKHKYPIGSGRVTFNNQRSYLKAVSAAFVEIKTPKFTKKVQIDPYLEDAICQSCSREPGPFFCRDKTCFKYYCRSCWHRQHSMDILSNHRPLMRNQKKRDAN</sequence>
<keyword id="KW-0963">Cytoplasm</keyword>
<keyword id="KW-0479">Metal-binding</keyword>
<keyword id="KW-0507">mRNA processing</keyword>
<keyword id="KW-1185">Reference proteome</keyword>
<keyword id="KW-0677">Repeat</keyword>
<keyword id="KW-0694">RNA-binding</keyword>
<keyword id="KW-0810">Translation regulation</keyword>
<keyword id="KW-0862">Zinc</keyword>
<name>CPEB1_DANRE</name>
<organism>
    <name type="scientific">Danio rerio</name>
    <name type="common">Zebrafish</name>
    <name type="synonym">Brachydanio rerio</name>
    <dbReference type="NCBI Taxonomy" id="7955"/>
    <lineage>
        <taxon>Eukaryota</taxon>
        <taxon>Metazoa</taxon>
        <taxon>Chordata</taxon>
        <taxon>Craniata</taxon>
        <taxon>Vertebrata</taxon>
        <taxon>Euteleostomi</taxon>
        <taxon>Actinopterygii</taxon>
        <taxon>Neopterygii</taxon>
        <taxon>Teleostei</taxon>
        <taxon>Ostariophysi</taxon>
        <taxon>Cypriniformes</taxon>
        <taxon>Danionidae</taxon>
        <taxon>Danioninae</taxon>
        <taxon>Danio</taxon>
    </lineage>
</organism>
<protein>
    <recommendedName>
        <fullName>Cytoplasmic polyadenylation element-binding protein 1</fullName>
        <shortName>CPE-BP1</shortName>
        <shortName>CPE-binding protein 1</shortName>
        <shortName>CPEB-1</shortName>
    </recommendedName>
    <alternativeName>
        <fullName>Orb/CPEB-related RNA-binding protein</fullName>
    </alternativeName>
    <alternativeName>
        <fullName>Protein Zorba</fullName>
    </alternativeName>
    <alternativeName>
        <fullName>ZOR-1</fullName>
    </alternativeName>
    <alternativeName>
        <fullName>Zebrafish orb-type a</fullName>
    </alternativeName>
</protein>